<gene>
    <name type="ordered locus">PC1_1036</name>
</gene>
<accession>C6DB43</accession>
<keyword id="KW-0547">Nucleotide-binding</keyword>
<sequence length="163" mass="18445">MPSFDIVSEIDMQEVRNAVENATRELSTRWDFRNVPASFELNEKSQSIKATSESDFQVQQLIDIMREKLLKRGIEGGALEVPEEFEHSGKTYSVEAKLKQGIETTQAKKIVKLIKDSKLKVQAQIQGEQVRVTGKSRDDLQGVMALIRGGNLGQPFQFTNFRD</sequence>
<organism>
    <name type="scientific">Pectobacterium carotovorum subsp. carotovorum (strain PC1)</name>
    <dbReference type="NCBI Taxonomy" id="561230"/>
    <lineage>
        <taxon>Bacteria</taxon>
        <taxon>Pseudomonadati</taxon>
        <taxon>Pseudomonadota</taxon>
        <taxon>Gammaproteobacteria</taxon>
        <taxon>Enterobacterales</taxon>
        <taxon>Pectobacteriaceae</taxon>
        <taxon>Pectobacterium</taxon>
    </lineage>
</organism>
<proteinExistence type="inferred from homology"/>
<comment type="function">
    <text evidence="1">Nucleotide-binding protein.</text>
</comment>
<comment type="similarity">
    <text evidence="1">Belongs to the YajQ family.</text>
</comment>
<protein>
    <recommendedName>
        <fullName evidence="1">Nucleotide-binding protein PC1_1036</fullName>
    </recommendedName>
</protein>
<dbReference type="EMBL" id="CP001657">
    <property type="protein sequence ID" value="ACT12085.1"/>
    <property type="molecule type" value="Genomic_DNA"/>
</dbReference>
<dbReference type="RefSeq" id="WP_015839336.1">
    <property type="nucleotide sequence ID" value="NC_012917.1"/>
</dbReference>
<dbReference type="SMR" id="C6DB43"/>
<dbReference type="STRING" id="561230.PC1_1036"/>
<dbReference type="KEGG" id="pct:PC1_1036"/>
<dbReference type="eggNOG" id="COG1666">
    <property type="taxonomic scope" value="Bacteria"/>
</dbReference>
<dbReference type="HOGENOM" id="CLU_099839_1_0_6"/>
<dbReference type="OrthoDB" id="9801447at2"/>
<dbReference type="Proteomes" id="UP000002736">
    <property type="component" value="Chromosome"/>
</dbReference>
<dbReference type="GO" id="GO:0005829">
    <property type="term" value="C:cytosol"/>
    <property type="evidence" value="ECO:0007669"/>
    <property type="project" value="TreeGrafter"/>
</dbReference>
<dbReference type="GO" id="GO:0000166">
    <property type="term" value="F:nucleotide binding"/>
    <property type="evidence" value="ECO:0007669"/>
    <property type="project" value="TreeGrafter"/>
</dbReference>
<dbReference type="CDD" id="cd11740">
    <property type="entry name" value="YajQ_like"/>
    <property type="match status" value="1"/>
</dbReference>
<dbReference type="FunFam" id="3.30.70.860:FF:000001">
    <property type="entry name" value="UPF0234 protein YajQ"/>
    <property type="match status" value="1"/>
</dbReference>
<dbReference type="FunFam" id="3.30.70.990:FF:000001">
    <property type="entry name" value="UPF0234 protein YajQ"/>
    <property type="match status" value="1"/>
</dbReference>
<dbReference type="Gene3D" id="3.30.70.860">
    <property type="match status" value="1"/>
</dbReference>
<dbReference type="Gene3D" id="3.30.70.990">
    <property type="entry name" value="YajQ-like, domain 2"/>
    <property type="match status" value="1"/>
</dbReference>
<dbReference type="HAMAP" id="MF_00632">
    <property type="entry name" value="YajQ"/>
    <property type="match status" value="1"/>
</dbReference>
<dbReference type="InterPro" id="IPR007551">
    <property type="entry name" value="DUF520"/>
</dbReference>
<dbReference type="InterPro" id="IPR035571">
    <property type="entry name" value="UPF0234-like_C"/>
</dbReference>
<dbReference type="InterPro" id="IPR035570">
    <property type="entry name" value="UPF0234_N"/>
</dbReference>
<dbReference type="InterPro" id="IPR036183">
    <property type="entry name" value="YajQ-like_sf"/>
</dbReference>
<dbReference type="NCBIfam" id="NF003819">
    <property type="entry name" value="PRK05412.1"/>
    <property type="match status" value="1"/>
</dbReference>
<dbReference type="PANTHER" id="PTHR30476">
    <property type="entry name" value="UPF0234 PROTEIN YAJQ"/>
    <property type="match status" value="1"/>
</dbReference>
<dbReference type="PANTHER" id="PTHR30476:SF0">
    <property type="entry name" value="UPF0234 PROTEIN YAJQ"/>
    <property type="match status" value="1"/>
</dbReference>
<dbReference type="Pfam" id="PF04461">
    <property type="entry name" value="DUF520"/>
    <property type="match status" value="1"/>
</dbReference>
<dbReference type="SUPFAM" id="SSF89963">
    <property type="entry name" value="YajQ-like"/>
    <property type="match status" value="2"/>
</dbReference>
<evidence type="ECO:0000255" key="1">
    <source>
        <dbReference type="HAMAP-Rule" id="MF_00632"/>
    </source>
</evidence>
<name>Y1036_PECCP</name>
<feature type="chain" id="PRO_1000212338" description="Nucleotide-binding protein PC1_1036">
    <location>
        <begin position="1"/>
        <end position="163"/>
    </location>
</feature>
<reference key="1">
    <citation type="submission" date="2009-07" db="EMBL/GenBank/DDBJ databases">
        <title>Complete sequence of Pectobacterium carotovorum subsp. carotovorum PC1.</title>
        <authorList>
            <consortium name="US DOE Joint Genome Institute"/>
            <person name="Lucas S."/>
            <person name="Copeland A."/>
            <person name="Lapidus A."/>
            <person name="Glavina del Rio T."/>
            <person name="Tice H."/>
            <person name="Bruce D."/>
            <person name="Goodwin L."/>
            <person name="Pitluck S."/>
            <person name="Munk A.C."/>
            <person name="Brettin T."/>
            <person name="Detter J.C."/>
            <person name="Han C."/>
            <person name="Tapia R."/>
            <person name="Larimer F."/>
            <person name="Land M."/>
            <person name="Hauser L."/>
            <person name="Kyrpides N."/>
            <person name="Mikhailova N."/>
            <person name="Balakrishnan V."/>
            <person name="Glasner J."/>
            <person name="Perna N.T."/>
        </authorList>
    </citation>
    <scope>NUCLEOTIDE SEQUENCE [LARGE SCALE GENOMIC DNA]</scope>
    <source>
        <strain>PC1</strain>
    </source>
</reference>